<dbReference type="EC" id="1.4.99.-" evidence="1"/>
<dbReference type="EMBL" id="CP001172">
    <property type="protein sequence ID" value="ACJ59200.1"/>
    <property type="molecule type" value="Genomic_DNA"/>
</dbReference>
<dbReference type="RefSeq" id="WP_001263980.1">
    <property type="nucleotide sequence ID" value="NZ_CP001172.1"/>
</dbReference>
<dbReference type="SMR" id="B7H2E9"/>
<dbReference type="HOGENOM" id="CLU_007884_9_2_6"/>
<dbReference type="UniPathway" id="UPA00043">
    <property type="reaction ID" value="UER00498"/>
</dbReference>
<dbReference type="Proteomes" id="UP000006924">
    <property type="component" value="Chromosome"/>
</dbReference>
<dbReference type="GO" id="GO:0005737">
    <property type="term" value="C:cytoplasm"/>
    <property type="evidence" value="ECO:0007669"/>
    <property type="project" value="TreeGrafter"/>
</dbReference>
<dbReference type="GO" id="GO:0005886">
    <property type="term" value="C:plasma membrane"/>
    <property type="evidence" value="ECO:0007669"/>
    <property type="project" value="TreeGrafter"/>
</dbReference>
<dbReference type="GO" id="GO:0008718">
    <property type="term" value="F:D-amino-acid dehydrogenase activity"/>
    <property type="evidence" value="ECO:0007669"/>
    <property type="project" value="UniProtKB-UniRule"/>
</dbReference>
<dbReference type="GO" id="GO:0055130">
    <property type="term" value="P:D-alanine catabolic process"/>
    <property type="evidence" value="ECO:0007669"/>
    <property type="project" value="UniProtKB-UniPathway"/>
</dbReference>
<dbReference type="FunFam" id="3.50.50.60:FF:000020">
    <property type="entry name" value="D-amino acid dehydrogenase"/>
    <property type="match status" value="1"/>
</dbReference>
<dbReference type="Gene3D" id="3.30.9.10">
    <property type="entry name" value="D-Amino Acid Oxidase, subunit A, domain 2"/>
    <property type="match status" value="1"/>
</dbReference>
<dbReference type="Gene3D" id="3.50.50.60">
    <property type="entry name" value="FAD/NAD(P)-binding domain"/>
    <property type="match status" value="2"/>
</dbReference>
<dbReference type="HAMAP" id="MF_01202">
    <property type="entry name" value="DadA"/>
    <property type="match status" value="1"/>
</dbReference>
<dbReference type="InterPro" id="IPR023080">
    <property type="entry name" value="DadA"/>
</dbReference>
<dbReference type="InterPro" id="IPR006076">
    <property type="entry name" value="FAD-dep_OxRdtase"/>
</dbReference>
<dbReference type="InterPro" id="IPR036188">
    <property type="entry name" value="FAD/NAD-bd_sf"/>
</dbReference>
<dbReference type="NCBIfam" id="NF001933">
    <property type="entry name" value="PRK00711.1"/>
    <property type="match status" value="1"/>
</dbReference>
<dbReference type="PANTHER" id="PTHR13847:SF280">
    <property type="entry name" value="D-AMINO ACID DEHYDROGENASE"/>
    <property type="match status" value="1"/>
</dbReference>
<dbReference type="PANTHER" id="PTHR13847">
    <property type="entry name" value="SARCOSINE DEHYDROGENASE-RELATED"/>
    <property type="match status" value="1"/>
</dbReference>
<dbReference type="Pfam" id="PF01266">
    <property type="entry name" value="DAO"/>
    <property type="match status" value="1"/>
</dbReference>
<dbReference type="SUPFAM" id="SSF54373">
    <property type="entry name" value="FAD-linked reductases, C-terminal domain"/>
    <property type="match status" value="1"/>
</dbReference>
<dbReference type="SUPFAM" id="SSF51905">
    <property type="entry name" value="FAD/NAD(P)-binding domain"/>
    <property type="match status" value="1"/>
</dbReference>
<organism>
    <name type="scientific">Acinetobacter baumannii (strain AB307-0294)</name>
    <dbReference type="NCBI Taxonomy" id="557600"/>
    <lineage>
        <taxon>Bacteria</taxon>
        <taxon>Pseudomonadati</taxon>
        <taxon>Pseudomonadota</taxon>
        <taxon>Gammaproteobacteria</taxon>
        <taxon>Moraxellales</taxon>
        <taxon>Moraxellaceae</taxon>
        <taxon>Acinetobacter</taxon>
        <taxon>Acinetobacter calcoaceticus/baumannii complex</taxon>
    </lineage>
</organism>
<accession>B7H2E9</accession>
<evidence type="ECO:0000255" key="1">
    <source>
        <dbReference type="HAMAP-Rule" id="MF_01202"/>
    </source>
</evidence>
<protein>
    <recommendedName>
        <fullName evidence="1">D-amino acid dehydrogenase</fullName>
        <ecNumber evidence="1">1.4.99.-</ecNumber>
    </recommendedName>
</protein>
<gene>
    <name evidence="1" type="primary">dadA</name>
    <name type="ordered locus">ABBFA_003422</name>
</gene>
<name>DADA_ACIB3</name>
<keyword id="KW-0274">FAD</keyword>
<keyword id="KW-0285">Flavoprotein</keyword>
<keyword id="KW-0560">Oxidoreductase</keyword>
<reference key="1">
    <citation type="journal article" date="2008" name="J. Bacteriol.">
        <title>Comparative genome sequence analysis of multidrug-resistant Acinetobacter baumannii.</title>
        <authorList>
            <person name="Adams M.D."/>
            <person name="Goglin K."/>
            <person name="Molyneaux N."/>
            <person name="Hujer K.M."/>
            <person name="Lavender H."/>
            <person name="Jamison J.J."/>
            <person name="MacDonald I.J."/>
            <person name="Martin K.M."/>
            <person name="Russo T."/>
            <person name="Campagnari A.A."/>
            <person name="Hujer A.M."/>
            <person name="Bonomo R.A."/>
            <person name="Gill S.R."/>
        </authorList>
    </citation>
    <scope>NUCLEOTIDE SEQUENCE [LARGE SCALE GENOMIC DNA]</scope>
    <source>
        <strain>AB307-0294</strain>
    </source>
</reference>
<feature type="chain" id="PRO_1000138634" description="D-amino acid dehydrogenase">
    <location>
        <begin position="1"/>
        <end position="421"/>
    </location>
</feature>
<feature type="binding site" evidence="1">
    <location>
        <begin position="3"/>
        <end position="17"/>
    </location>
    <ligand>
        <name>FAD</name>
        <dbReference type="ChEBI" id="CHEBI:57692"/>
    </ligand>
</feature>
<proteinExistence type="inferred from homology"/>
<comment type="function">
    <text evidence="1">Oxidative deamination of D-amino acids.</text>
</comment>
<comment type="catalytic activity">
    <reaction evidence="1">
        <text>a D-alpha-amino acid + A + H2O = a 2-oxocarboxylate + AH2 + NH4(+)</text>
        <dbReference type="Rhea" id="RHEA:18125"/>
        <dbReference type="ChEBI" id="CHEBI:13193"/>
        <dbReference type="ChEBI" id="CHEBI:15377"/>
        <dbReference type="ChEBI" id="CHEBI:17499"/>
        <dbReference type="ChEBI" id="CHEBI:28938"/>
        <dbReference type="ChEBI" id="CHEBI:35179"/>
        <dbReference type="ChEBI" id="CHEBI:59871"/>
    </reaction>
</comment>
<comment type="cofactor">
    <cofactor evidence="1">
        <name>FAD</name>
        <dbReference type="ChEBI" id="CHEBI:57692"/>
    </cofactor>
</comment>
<comment type="pathway">
    <text>Amino-acid degradation; D-alanine degradation; NH(3) and pyruvate from D-alanine: step 1/1.</text>
</comment>
<comment type="similarity">
    <text evidence="1">Belongs to the DadA oxidoreductase family.</text>
</comment>
<sequence length="421" mass="46426">MRVIVLGSGVIGVASAYYLARQGAEVTVLDRQSGPAEETSFGNAGQISPGYSTPWAAPGIPFKAVKWMFQHHAPLAINLDGSMWQLQWMAQMLKNCNPQSYAVNKERMMRVAEYSRDCLRELRKDTGIHYENRAKGTLQLFRKEAQMEAVQRDISVLEECGVSYELLNGNELGRVEPALANAQDKLVGGLHLPNDETGDCYLFTNALAQIAKELGVNFQFNQNVEKLIVEGDQIKGVQVNGKVLTADRYVLAFGSYSRDFLKPLDLQLPVYPVKGYSLTIPIVDPAFAPQSTVLDETYKIAITRFDQRIRVGGMAELSGFNLGLNEDRRATLQMVTQDLFPGGDMAQASFWTGLRPMTPDSTPIIGATRFKNLFLNTGHGTLGWTMACGSGKLISDIVLNHKTDISTDGLSIQRYSHAHAA</sequence>